<sequence>MALNLQDKQAIVAEVSEVAKGALSAVVADSRGVTVDKMTELRKAGREAGVYMRVVRNTLLRRVVEGTQFECLKDTFVGPTLIAYSMEHPGAAARLFKEFAKANAKFEVKAAAFEGELIPASQIDRLATLPTYEEAIARLMATMKEASAGKLVRTLAAVRDAKEAA</sequence>
<feature type="chain" id="PRO_0000234884" description="Large ribosomal subunit protein uL10">
    <location>
        <begin position="1"/>
        <end position="165"/>
    </location>
</feature>
<gene>
    <name evidence="1" type="primary">rplJ</name>
    <name type="ordered locus">SPA3989</name>
</gene>
<comment type="function">
    <text evidence="1">Forms part of the ribosomal stalk, playing a central role in the interaction of the ribosome with GTP-bound translation factors.</text>
</comment>
<comment type="subunit">
    <text evidence="1">Part of the ribosomal stalk of the 50S ribosomal subunit. The N-terminus interacts with L11 and the large rRNA to form the base of the stalk. The C-terminus forms an elongated spine to which L12 dimers bind in a sequential fashion forming a multimeric L10(L12)X complex.</text>
</comment>
<comment type="similarity">
    <text evidence="1">Belongs to the universal ribosomal protein uL10 family.</text>
</comment>
<dbReference type="EMBL" id="CP000026">
    <property type="protein sequence ID" value="AAV79741.1"/>
    <property type="molecule type" value="Genomic_DNA"/>
</dbReference>
<dbReference type="RefSeq" id="WP_001207203.1">
    <property type="nucleotide sequence ID" value="NC_006511.1"/>
</dbReference>
<dbReference type="GeneID" id="93756505"/>
<dbReference type="KEGG" id="spt:SPA3989"/>
<dbReference type="HOGENOM" id="CLU_092227_0_2_6"/>
<dbReference type="Proteomes" id="UP000008185">
    <property type="component" value="Chromosome"/>
</dbReference>
<dbReference type="GO" id="GO:0015934">
    <property type="term" value="C:large ribosomal subunit"/>
    <property type="evidence" value="ECO:0007669"/>
    <property type="project" value="InterPro"/>
</dbReference>
<dbReference type="GO" id="GO:0070180">
    <property type="term" value="F:large ribosomal subunit rRNA binding"/>
    <property type="evidence" value="ECO:0007669"/>
    <property type="project" value="UniProtKB-UniRule"/>
</dbReference>
<dbReference type="GO" id="GO:0003735">
    <property type="term" value="F:structural constituent of ribosome"/>
    <property type="evidence" value="ECO:0007669"/>
    <property type="project" value="InterPro"/>
</dbReference>
<dbReference type="GO" id="GO:0006412">
    <property type="term" value="P:translation"/>
    <property type="evidence" value="ECO:0007669"/>
    <property type="project" value="UniProtKB-UniRule"/>
</dbReference>
<dbReference type="CDD" id="cd05797">
    <property type="entry name" value="Ribosomal_L10"/>
    <property type="match status" value="1"/>
</dbReference>
<dbReference type="FunFam" id="3.30.70.1730:FF:000001">
    <property type="entry name" value="50S ribosomal protein L10"/>
    <property type="match status" value="1"/>
</dbReference>
<dbReference type="Gene3D" id="3.30.70.1730">
    <property type="match status" value="1"/>
</dbReference>
<dbReference type="Gene3D" id="6.10.250.2350">
    <property type="match status" value="1"/>
</dbReference>
<dbReference type="HAMAP" id="MF_00362">
    <property type="entry name" value="Ribosomal_uL10"/>
    <property type="match status" value="1"/>
</dbReference>
<dbReference type="InterPro" id="IPR001790">
    <property type="entry name" value="Ribosomal_uL10"/>
</dbReference>
<dbReference type="InterPro" id="IPR043141">
    <property type="entry name" value="Ribosomal_uL10-like_sf"/>
</dbReference>
<dbReference type="InterPro" id="IPR022973">
    <property type="entry name" value="Ribosomal_uL10_bac"/>
</dbReference>
<dbReference type="InterPro" id="IPR047865">
    <property type="entry name" value="Ribosomal_uL10_bac_type"/>
</dbReference>
<dbReference type="InterPro" id="IPR002363">
    <property type="entry name" value="Ribosomal_uL10_CS_bac"/>
</dbReference>
<dbReference type="NCBIfam" id="NF000955">
    <property type="entry name" value="PRK00099.1-1"/>
    <property type="match status" value="1"/>
</dbReference>
<dbReference type="PANTHER" id="PTHR11560">
    <property type="entry name" value="39S RIBOSOMAL PROTEIN L10, MITOCHONDRIAL"/>
    <property type="match status" value="1"/>
</dbReference>
<dbReference type="Pfam" id="PF00466">
    <property type="entry name" value="Ribosomal_L10"/>
    <property type="match status" value="1"/>
</dbReference>
<dbReference type="SUPFAM" id="SSF160369">
    <property type="entry name" value="Ribosomal protein L10-like"/>
    <property type="match status" value="1"/>
</dbReference>
<dbReference type="PROSITE" id="PS01109">
    <property type="entry name" value="RIBOSOMAL_L10"/>
    <property type="match status" value="1"/>
</dbReference>
<proteinExistence type="inferred from homology"/>
<accession>Q5PK95</accession>
<protein>
    <recommendedName>
        <fullName evidence="1">Large ribosomal subunit protein uL10</fullName>
    </recommendedName>
    <alternativeName>
        <fullName evidence="2">50S ribosomal protein L10</fullName>
    </alternativeName>
</protein>
<organism>
    <name type="scientific">Salmonella paratyphi A (strain ATCC 9150 / SARB42)</name>
    <dbReference type="NCBI Taxonomy" id="295319"/>
    <lineage>
        <taxon>Bacteria</taxon>
        <taxon>Pseudomonadati</taxon>
        <taxon>Pseudomonadota</taxon>
        <taxon>Gammaproteobacteria</taxon>
        <taxon>Enterobacterales</taxon>
        <taxon>Enterobacteriaceae</taxon>
        <taxon>Salmonella</taxon>
    </lineage>
</organism>
<reference key="1">
    <citation type="journal article" date="2004" name="Nat. Genet.">
        <title>Comparison of genome degradation in Paratyphi A and Typhi, human-restricted serovars of Salmonella enterica that cause typhoid.</title>
        <authorList>
            <person name="McClelland M."/>
            <person name="Sanderson K.E."/>
            <person name="Clifton S.W."/>
            <person name="Latreille P."/>
            <person name="Porwollik S."/>
            <person name="Sabo A."/>
            <person name="Meyer R."/>
            <person name="Bieri T."/>
            <person name="Ozersky P."/>
            <person name="McLellan M."/>
            <person name="Harkins C.R."/>
            <person name="Wang C."/>
            <person name="Nguyen C."/>
            <person name="Berghoff A."/>
            <person name="Elliott G."/>
            <person name="Kohlberg S."/>
            <person name="Strong C."/>
            <person name="Du F."/>
            <person name="Carter J."/>
            <person name="Kremizki C."/>
            <person name="Layman D."/>
            <person name="Leonard S."/>
            <person name="Sun H."/>
            <person name="Fulton L."/>
            <person name="Nash W."/>
            <person name="Miner T."/>
            <person name="Minx P."/>
            <person name="Delehaunty K."/>
            <person name="Fronick C."/>
            <person name="Magrini V."/>
            <person name="Nhan M."/>
            <person name="Warren W."/>
            <person name="Florea L."/>
            <person name="Spieth J."/>
            <person name="Wilson R.K."/>
        </authorList>
    </citation>
    <scope>NUCLEOTIDE SEQUENCE [LARGE SCALE GENOMIC DNA]</scope>
    <source>
        <strain>ATCC 9150 / SARB42</strain>
    </source>
</reference>
<keyword id="KW-0687">Ribonucleoprotein</keyword>
<keyword id="KW-0689">Ribosomal protein</keyword>
<keyword id="KW-0694">RNA-binding</keyword>
<keyword id="KW-0699">rRNA-binding</keyword>
<name>RL10_SALPA</name>
<evidence type="ECO:0000255" key="1">
    <source>
        <dbReference type="HAMAP-Rule" id="MF_00362"/>
    </source>
</evidence>
<evidence type="ECO:0000305" key="2"/>